<gene>
    <name type="primary">celS</name>
    <name type="ordered locus">Cthe_2089</name>
</gene>
<reference key="1">
    <citation type="journal article" date="1993" name="J. Bacteriol.">
        <title>Cloning and DNA sequence of the gene coding for Clostridium thermocellum cellulase Ss (CelS), a major cellulosome component.</title>
        <authorList>
            <person name="Wang W.K."/>
            <person name="Kruus K."/>
            <person name="Wu J.H.D."/>
        </authorList>
    </citation>
    <scope>NUCLEOTIDE SEQUENCE [GENOMIC DNA]</scope>
    <scope>PROTEIN SEQUENCE OF 28-37; 412-431 AND 589-605</scope>
</reference>
<reference key="2">
    <citation type="journal article" date="1995" name="Appl. Microbiol. Biotechnol.">
        <title>Product inhibition of the recombinant CelS, an exoglucanase component of the Clostridium thermocellum cellulosome.</title>
        <authorList>
            <person name="Kruus K."/>
            <person name="Andreacchi A."/>
            <person name="Wang W.K."/>
            <person name="Wu J.H.D."/>
        </authorList>
    </citation>
    <scope>NUCLEOTIDE SEQUENCE [GENOMIC DNA]</scope>
    <scope>ACTIVITY REGULATION</scope>
</reference>
<reference key="3">
    <citation type="journal article" date="1995" name="J. Bacteriol.">
        <title>Exoglucanase activities of the recombinant Clostridium thermocellum CelS, a major cellulosome component.</title>
        <authorList>
            <person name="Kruus K."/>
            <person name="Wang W.K."/>
            <person name="Ching J."/>
            <person name="Wu J.H."/>
        </authorList>
    </citation>
    <scope>FUNCTION</scope>
    <scope>CATALYTIC ACTIVITY</scope>
    <scope>BIOPHYSICOCHEMICAL PROPERTIES</scope>
</reference>
<reference key="4">
    <citation type="submission" date="2007-02" db="EMBL/GenBank/DDBJ databases">
        <title>Complete sequence of Clostridium thermocellum ATCC 27405.</title>
        <authorList>
            <consortium name="US DOE Joint Genome Institute"/>
            <person name="Copeland A."/>
            <person name="Lucas S."/>
            <person name="Lapidus A."/>
            <person name="Barry K."/>
            <person name="Detter J.C."/>
            <person name="Glavina del Rio T."/>
            <person name="Hammon N."/>
            <person name="Israni S."/>
            <person name="Dalin E."/>
            <person name="Tice H."/>
            <person name="Pitluck S."/>
            <person name="Chertkov O."/>
            <person name="Brettin T."/>
            <person name="Bruce D."/>
            <person name="Han C."/>
            <person name="Tapia R."/>
            <person name="Gilna P."/>
            <person name="Schmutz J."/>
            <person name="Larimer F."/>
            <person name="Land M."/>
            <person name="Hauser L."/>
            <person name="Kyrpides N."/>
            <person name="Mikhailova N."/>
            <person name="Wu J.H.D."/>
            <person name="Newcomb M."/>
            <person name="Richardson P."/>
        </authorList>
    </citation>
    <scope>NUCLEOTIDE SEQUENCE [LARGE SCALE GENOMIC DNA]</scope>
    <source>
        <strain>ATCC 27405 / DSM 1237 / JCM 9322 / NBRC 103400 / NCIMB 10682 / NRRL B-4536 / VPI 7372</strain>
    </source>
</reference>
<organism>
    <name type="scientific">Acetivibrio thermocellus (strain ATCC 27405 / DSM 1237 / JCM 9322 / NBRC 103400 / NCIMB 10682 / NRRL B-4536 / VPI 7372)</name>
    <name type="common">Clostridium thermocellum</name>
    <dbReference type="NCBI Taxonomy" id="203119"/>
    <lineage>
        <taxon>Bacteria</taxon>
        <taxon>Bacillati</taxon>
        <taxon>Bacillota</taxon>
        <taxon>Clostridia</taxon>
        <taxon>Eubacteriales</taxon>
        <taxon>Oscillospiraceae</taxon>
        <taxon>Acetivibrio</taxon>
    </lineage>
</organism>
<dbReference type="EC" id="3.2.1.176"/>
<dbReference type="EMBL" id="L06942">
    <property type="protein sequence ID" value="AAA23226.1"/>
    <property type="molecule type" value="Genomic_DNA"/>
</dbReference>
<dbReference type="EMBL" id="CP000568">
    <property type="protein sequence ID" value="ABN53296.1"/>
    <property type="molecule type" value="Genomic_DNA"/>
</dbReference>
<dbReference type="PIR" id="A47063">
    <property type="entry name" value="A47063"/>
</dbReference>
<dbReference type="RefSeq" id="WP_020457708.1">
    <property type="nucleotide sequence ID" value="NC_009012.1"/>
</dbReference>
<dbReference type="BMRB" id="A3DH67"/>
<dbReference type="SMR" id="A3DH67"/>
<dbReference type="STRING" id="203119.Cthe_2089"/>
<dbReference type="CAZy" id="GH48">
    <property type="family name" value="Glycoside Hydrolase Family 48"/>
</dbReference>
<dbReference type="GeneID" id="35805096"/>
<dbReference type="KEGG" id="cth:Cthe_2089"/>
<dbReference type="eggNOG" id="COG5297">
    <property type="taxonomic scope" value="Bacteria"/>
</dbReference>
<dbReference type="HOGENOM" id="CLU_009014_1_0_9"/>
<dbReference type="OrthoDB" id="33861at2"/>
<dbReference type="BioCyc" id="MetaCyc:MONOMER-16423"/>
<dbReference type="BRENDA" id="3.2.1.176">
    <property type="organism ID" value="1530"/>
</dbReference>
<dbReference type="Proteomes" id="UP000002145">
    <property type="component" value="Chromosome"/>
</dbReference>
<dbReference type="GO" id="GO:0005576">
    <property type="term" value="C:extracellular region"/>
    <property type="evidence" value="ECO:0007669"/>
    <property type="project" value="UniProtKB-SubCell"/>
</dbReference>
<dbReference type="GO" id="GO:0008810">
    <property type="term" value="F:cellulase activity"/>
    <property type="evidence" value="ECO:0007669"/>
    <property type="project" value="InterPro"/>
</dbReference>
<dbReference type="GO" id="GO:0102252">
    <property type="term" value="F:cellulose 1,4-beta-cellobiosidase activity (reducing end)"/>
    <property type="evidence" value="ECO:0007669"/>
    <property type="project" value="UniProtKB-EC"/>
</dbReference>
<dbReference type="GO" id="GO:0046872">
    <property type="term" value="F:metal ion binding"/>
    <property type="evidence" value="ECO:0007669"/>
    <property type="project" value="UniProtKB-KW"/>
</dbReference>
<dbReference type="GO" id="GO:0030245">
    <property type="term" value="P:cellulose catabolic process"/>
    <property type="evidence" value="ECO:0007669"/>
    <property type="project" value="UniProtKB-KW"/>
</dbReference>
<dbReference type="CDD" id="cd14256">
    <property type="entry name" value="Dockerin_I"/>
    <property type="match status" value="1"/>
</dbReference>
<dbReference type="FunFam" id="1.10.1330.10:FF:000001">
    <property type="entry name" value="Endoglucanase D"/>
    <property type="match status" value="1"/>
</dbReference>
<dbReference type="Gene3D" id="1.50.10.10">
    <property type="match status" value="1"/>
</dbReference>
<dbReference type="Gene3D" id="1.10.1330.10">
    <property type="entry name" value="Dockerin domain"/>
    <property type="match status" value="1"/>
</dbReference>
<dbReference type="Gene3D" id="2.170.160.10">
    <property type="entry name" value="Endo-1,4-beta-glucanase f. Domain 2"/>
    <property type="match status" value="1"/>
</dbReference>
<dbReference type="Gene3D" id="4.10.870.10">
    <property type="entry name" value="Endo-1,4-beta-glucanase f. Domain 3"/>
    <property type="match status" value="1"/>
</dbReference>
<dbReference type="InterPro" id="IPR008928">
    <property type="entry name" value="6-hairpin_glycosidase_sf"/>
</dbReference>
<dbReference type="InterPro" id="IPR012341">
    <property type="entry name" value="6hp_glycosidase-like_sf"/>
</dbReference>
<dbReference type="InterPro" id="IPR002105">
    <property type="entry name" value="Dockerin_1_rpt"/>
</dbReference>
<dbReference type="InterPro" id="IPR016134">
    <property type="entry name" value="Dockerin_dom"/>
</dbReference>
<dbReference type="InterPro" id="IPR036439">
    <property type="entry name" value="Dockerin_dom_sf"/>
</dbReference>
<dbReference type="InterPro" id="IPR023309">
    <property type="entry name" value="Endo-1-4-beta-glucanase_dom2"/>
</dbReference>
<dbReference type="InterPro" id="IPR027390">
    <property type="entry name" value="Endoglucanase_F_dom3"/>
</dbReference>
<dbReference type="InterPro" id="IPR000556">
    <property type="entry name" value="Glyco_hydro_48F"/>
</dbReference>
<dbReference type="Pfam" id="PF00404">
    <property type="entry name" value="Dockerin_1"/>
    <property type="match status" value="1"/>
</dbReference>
<dbReference type="Pfam" id="PF02011">
    <property type="entry name" value="Glyco_hydro_48"/>
    <property type="match status" value="1"/>
</dbReference>
<dbReference type="PRINTS" id="PR00844">
    <property type="entry name" value="GLHYDRLASE48"/>
</dbReference>
<dbReference type="SUPFAM" id="SSF48208">
    <property type="entry name" value="Six-hairpin glycosidases"/>
    <property type="match status" value="1"/>
</dbReference>
<dbReference type="SUPFAM" id="SSF63446">
    <property type="entry name" value="Type I dockerin domain"/>
    <property type="match status" value="1"/>
</dbReference>
<dbReference type="PROSITE" id="PS00448">
    <property type="entry name" value="CLOS_CELLULOSOME_RPT"/>
    <property type="match status" value="2"/>
</dbReference>
<dbReference type="PROSITE" id="PS51766">
    <property type="entry name" value="DOCKERIN"/>
    <property type="match status" value="1"/>
</dbReference>
<feature type="signal peptide" evidence="4">
    <location>
        <begin position="1"/>
        <end position="27"/>
    </location>
</feature>
<feature type="chain" id="PRO_0000284723" description="Cellulose 1,4-beta-cellobiosidase (reducing end) CelS">
    <location>
        <begin position="28"/>
        <end position="741"/>
    </location>
</feature>
<feature type="domain" description="Dockerin" evidence="2">
    <location>
        <begin position="673"/>
        <end position="739"/>
    </location>
</feature>
<feature type="active site" description="Proton donor" evidence="1">
    <location>
        <position position="87"/>
    </location>
</feature>
<feature type="active site" description="Nucleophile" evidence="1">
    <location>
        <position position="255"/>
    </location>
</feature>
<feature type="binding site" evidence="1">
    <location>
        <position position="76"/>
    </location>
    <ligand>
        <name>substrate</name>
    </ligand>
</feature>
<feature type="binding site" evidence="1">
    <location>
        <position position="140"/>
    </location>
    <ligand>
        <name>substrate</name>
    </ligand>
</feature>
<feature type="binding site" evidence="1">
    <location>
        <position position="204"/>
    </location>
    <ligand>
        <name>substrate</name>
    </ligand>
</feature>
<feature type="binding site" evidence="1">
    <location>
        <position position="241"/>
    </location>
    <ligand>
        <name>substrate</name>
    </ligand>
</feature>
<feature type="binding site" evidence="1">
    <location>
        <position position="247"/>
    </location>
    <ligand>
        <name>substrate</name>
    </ligand>
</feature>
<feature type="binding site" evidence="1">
    <location>
        <begin position="251"/>
        <end position="252"/>
    </location>
    <ligand>
        <name>substrate</name>
    </ligand>
</feature>
<feature type="binding site" evidence="1">
    <location>
        <begin position="301"/>
        <end position="302"/>
    </location>
    <ligand>
        <name>substrate</name>
    </ligand>
</feature>
<feature type="binding site" evidence="1">
    <location>
        <begin position="326"/>
        <end position="327"/>
    </location>
    <ligand>
        <name>substrate</name>
    </ligand>
</feature>
<feature type="binding site" evidence="1">
    <location>
        <position position="421"/>
    </location>
    <ligand>
        <name>substrate</name>
    </ligand>
</feature>
<feature type="binding site" evidence="1">
    <location>
        <position position="520"/>
    </location>
    <ligand>
        <name>substrate</name>
    </ligand>
</feature>
<feature type="binding site" evidence="1">
    <location>
        <begin position="645"/>
        <end position="646"/>
    </location>
    <ligand>
        <name>substrate</name>
    </ligand>
</feature>
<feature type="binding site" evidence="1">
    <location>
        <position position="679"/>
    </location>
    <ligand>
        <name>Ca(2+)</name>
        <dbReference type="ChEBI" id="CHEBI:29108"/>
        <label>1</label>
    </ligand>
</feature>
<feature type="binding site" evidence="1">
    <location>
        <position position="681"/>
    </location>
    <ligand>
        <name>Ca(2+)</name>
        <dbReference type="ChEBI" id="CHEBI:29108"/>
        <label>1</label>
    </ligand>
</feature>
<feature type="binding site" evidence="1">
    <location>
        <position position="683"/>
    </location>
    <ligand>
        <name>Ca(2+)</name>
        <dbReference type="ChEBI" id="CHEBI:29108"/>
        <label>1</label>
    </ligand>
</feature>
<feature type="binding site" evidence="1">
    <location>
        <position position="684"/>
    </location>
    <ligand>
        <name>Ca(2+)</name>
        <dbReference type="ChEBI" id="CHEBI:29108"/>
        <label>1</label>
    </ligand>
</feature>
<feature type="binding site" evidence="1">
    <location>
        <position position="685"/>
    </location>
    <ligand>
        <name>Ca(2+)</name>
        <dbReference type="ChEBI" id="CHEBI:29108"/>
        <label>1</label>
    </ligand>
</feature>
<feature type="binding site" evidence="1">
    <location>
        <position position="690"/>
    </location>
    <ligand>
        <name>Ca(2+)</name>
        <dbReference type="ChEBI" id="CHEBI:29108"/>
        <label>1</label>
    </ligand>
</feature>
<feature type="binding site" evidence="1">
    <location>
        <position position="711"/>
    </location>
    <ligand>
        <name>Ca(2+)</name>
        <dbReference type="ChEBI" id="CHEBI:29108"/>
        <label>2</label>
    </ligand>
</feature>
<feature type="binding site" evidence="1">
    <location>
        <position position="711"/>
    </location>
    <ligand>
        <name>Ca(2+)</name>
        <dbReference type="ChEBI" id="CHEBI:29108"/>
        <label>3</label>
    </ligand>
</feature>
<feature type="binding site" evidence="1">
    <location>
        <position position="712"/>
    </location>
    <ligand>
        <name>Ca(2+)</name>
        <dbReference type="ChEBI" id="CHEBI:29108"/>
        <label>2</label>
    </ligand>
</feature>
<feature type="binding site" evidence="1">
    <location>
        <position position="713"/>
    </location>
    <ligand>
        <name>Ca(2+)</name>
        <dbReference type="ChEBI" id="CHEBI:29108"/>
        <label>3</label>
    </ligand>
</feature>
<feature type="binding site" evidence="1">
    <location>
        <position position="715"/>
    </location>
    <ligand>
        <name>Ca(2+)</name>
        <dbReference type="ChEBI" id="CHEBI:29108"/>
        <label>3</label>
    </ligand>
</feature>
<feature type="binding site" evidence="1">
    <location>
        <position position="717"/>
    </location>
    <ligand>
        <name>Ca(2+)</name>
        <dbReference type="ChEBI" id="CHEBI:29108"/>
        <label>2</label>
    </ligand>
</feature>
<feature type="binding site" evidence="1">
    <location>
        <position position="717"/>
    </location>
    <ligand>
        <name>Ca(2+)</name>
        <dbReference type="ChEBI" id="CHEBI:29108"/>
        <label>3</label>
    </ligand>
</feature>
<feature type="binding site" evidence="1">
    <location>
        <position position="722"/>
    </location>
    <ligand>
        <name>Ca(2+)</name>
        <dbReference type="ChEBI" id="CHEBI:29108"/>
        <label>2</label>
    </ligand>
</feature>
<feature type="binding site" evidence="1">
    <location>
        <position position="722"/>
    </location>
    <ligand>
        <name>Ca(2+)</name>
        <dbReference type="ChEBI" id="CHEBI:29108"/>
        <label>3</label>
    </ligand>
</feature>
<protein>
    <recommendedName>
        <fullName>Cellulose 1,4-beta-cellobiosidase (reducing end) CelS</fullName>
        <ecNumber>3.2.1.176</ecNumber>
    </recommendedName>
    <alternativeName>
        <fullName>Cellobiohydrolase CelS</fullName>
    </alternativeName>
    <alternativeName>
        <fullName>Cellulase SS</fullName>
    </alternativeName>
    <alternativeName>
        <fullName>Endo-1,4-beta-glucanase</fullName>
    </alternativeName>
    <alternativeName>
        <fullName>Endoglucanase SS</fullName>
        <shortName>EGSS</shortName>
    </alternativeName>
    <alternativeName>
        <fullName>Exocellulase</fullName>
    </alternativeName>
</protein>
<accession>A3DH67</accession>
<accession>P38686</accession>
<name>GUNS_ACET2</name>
<sequence>MVKSRKISILLAVAMLVSIMIPTTAFAGPTKAPTKDGTSYKDLFLELYGKIKDPKNGYFSPDEGIPYHSIETLIVEAPDYGHVTTSEAFSYYVWLEAMYGNLTGNWSGVETAWKVMEDWIIPDSTEQPGMSSYNPNSPATYADEYEDPSYYPSELKFDTVRVGSDPVHNDLVSAYGPNMYLMHWLMDVDNWYGFGTGTRATFINTFQRGEQESTWETIPHPSIEEFKYGGPNGFLDLFTKDRSYAKQWRYTNAPDAEGRAIQAVYWANKWAKEQGKGSAVASVVSKAAKMGDFLRNDMFDKYFMKIGAQDKTPATGYDSAHYLMAWYTAWGGGIGASWAWKIGCSHAHFGYQNPFQGWVSATQSDFAPKSSNGKRDWTTSYKRQLEFYQWLQSAEGGIAGGATNSWNGRYEKYPAGTSTFYGMAYVPHPVYADPGSNQWFGFQAWSMQRVMEYYLETGDSSVKNLIKKWVDWVMSEIKLYDDGTFAIPSDLEWSGQPDTWTGTYTGNPNLHVRVTSYGTDLGVAGSLANALATYAAATERWEGKLDTKARDMAAELVNRAWYNFYCSEGKGVVTEEARADYKRFFEQEVYVPAGWSGTMPNGDKIQPGIKFIDIRTKYRQDPYYDIVYQAYLRGEAPVLNYHRFWHEVDLAVAMGVLATYFPDMTYKVPGTPSTKLYGDVNDDGKVNSTDAVALKRYVLRSGISINTDNADLNEDGRVNSTDLGILKRYILKEIDTLPYKN</sequence>
<proteinExistence type="evidence at protein level"/>
<keyword id="KW-0106">Calcium</keyword>
<keyword id="KW-0119">Carbohydrate metabolism</keyword>
<keyword id="KW-0136">Cellulose degradation</keyword>
<keyword id="KW-0903">Direct protein sequencing</keyword>
<keyword id="KW-0326">Glycosidase</keyword>
<keyword id="KW-0378">Hydrolase</keyword>
<keyword id="KW-0479">Metal-binding</keyword>
<keyword id="KW-0624">Polysaccharide degradation</keyword>
<keyword id="KW-1185">Reference proteome</keyword>
<keyword id="KW-0964">Secreted</keyword>
<keyword id="KW-0732">Signal</keyword>
<comment type="function">
    <text evidence="3">This enzyme catalyzes the exohydrolysis of 1,4-beta-glucosidic linkages in cellulose with a preference for amorphous or crystalline cellulose over carboxymethyl cellulose.</text>
</comment>
<comment type="catalytic activity">
    <reaction evidence="3">
        <text>Hydrolysis of (1-&gt;4)-beta-D-glucosidic linkages in cellulose and similar substrates, releasing cellobiose from the reducing ends of the chains.</text>
        <dbReference type="EC" id="3.2.1.176"/>
    </reaction>
</comment>
<comment type="activity regulation">
    <text evidence="5">Inhibited by cellobiose and lactose, but not by glucose.</text>
</comment>
<comment type="biophysicochemical properties">
    <phDependence>
        <text evidence="3">Optimum pH is 5-6.</text>
    </phDependence>
    <temperatureDependence>
        <text evidence="3">Optimum temperature is 70 degrees Celsius.</text>
    </temperatureDependence>
</comment>
<comment type="subcellular location">
    <subcellularLocation>
        <location>Secreted</location>
    </subcellularLocation>
</comment>
<comment type="similarity">
    <text evidence="6">Belongs to the glycosyl hydrolase 48 (cellulase L) family.</text>
</comment>
<evidence type="ECO:0000250" key="1"/>
<evidence type="ECO:0000255" key="2">
    <source>
        <dbReference type="PROSITE-ProRule" id="PRU01102"/>
    </source>
</evidence>
<evidence type="ECO:0000269" key="3">
    <source>
    </source>
</evidence>
<evidence type="ECO:0000269" key="4">
    <source>
    </source>
</evidence>
<evidence type="ECO:0000269" key="5">
    <source>
    </source>
</evidence>
<evidence type="ECO:0000305" key="6"/>